<feature type="chain" id="PRO_1000114767" description="Bifunctional uridylyltransferase/uridylyl-removing enzyme">
    <location>
        <begin position="1"/>
        <end position="890"/>
    </location>
</feature>
<feature type="domain" description="HD" evidence="2">
    <location>
        <begin position="468"/>
        <end position="590"/>
    </location>
</feature>
<feature type="domain" description="ACT 1" evidence="1">
    <location>
        <begin position="709"/>
        <end position="789"/>
    </location>
</feature>
<feature type="domain" description="ACT 2" evidence="1">
    <location>
        <begin position="816"/>
        <end position="890"/>
    </location>
</feature>
<feature type="region of interest" description="Uridylyltransferase">
    <location>
        <begin position="1"/>
        <end position="349"/>
    </location>
</feature>
<feature type="region of interest" description="Uridylyl-removing">
    <location>
        <begin position="350"/>
        <end position="708"/>
    </location>
</feature>
<accession>B2U309</accession>
<comment type="function">
    <text evidence="1">Modifies, by uridylylation and deuridylylation, the PII regulatory proteins (GlnB and homologs), in response to the nitrogen status of the cell that GlnD senses through the glutamine level. Under low glutamine levels, catalyzes the conversion of the PII proteins and UTP to PII-UMP and PPi, while under higher glutamine levels, GlnD hydrolyzes PII-UMP to PII and UMP (deuridylylation). Thus, controls uridylylation state and activity of the PII proteins, and plays an important role in the regulation of nitrogen assimilation and metabolism.</text>
</comment>
<comment type="catalytic activity">
    <reaction evidence="1">
        <text>[protein-PII]-L-tyrosine + UTP = [protein-PII]-uridylyl-L-tyrosine + diphosphate</text>
        <dbReference type="Rhea" id="RHEA:13673"/>
        <dbReference type="Rhea" id="RHEA-COMP:12147"/>
        <dbReference type="Rhea" id="RHEA-COMP:12148"/>
        <dbReference type="ChEBI" id="CHEBI:33019"/>
        <dbReference type="ChEBI" id="CHEBI:46398"/>
        <dbReference type="ChEBI" id="CHEBI:46858"/>
        <dbReference type="ChEBI" id="CHEBI:90602"/>
        <dbReference type="EC" id="2.7.7.59"/>
    </reaction>
</comment>
<comment type="catalytic activity">
    <reaction evidence="1">
        <text>[protein-PII]-uridylyl-L-tyrosine + H2O = [protein-PII]-L-tyrosine + UMP + H(+)</text>
        <dbReference type="Rhea" id="RHEA:48600"/>
        <dbReference type="Rhea" id="RHEA-COMP:12147"/>
        <dbReference type="Rhea" id="RHEA-COMP:12148"/>
        <dbReference type="ChEBI" id="CHEBI:15377"/>
        <dbReference type="ChEBI" id="CHEBI:15378"/>
        <dbReference type="ChEBI" id="CHEBI:46858"/>
        <dbReference type="ChEBI" id="CHEBI:57865"/>
        <dbReference type="ChEBI" id="CHEBI:90602"/>
    </reaction>
</comment>
<comment type="cofactor">
    <cofactor evidence="1">
        <name>Mg(2+)</name>
        <dbReference type="ChEBI" id="CHEBI:18420"/>
    </cofactor>
</comment>
<comment type="activity regulation">
    <text evidence="1">Uridylyltransferase (UTase) activity is inhibited by glutamine, while glutamine activates uridylyl-removing (UR) activity.</text>
</comment>
<comment type="domain">
    <text evidence="1">Has four distinct domains: an N-terminal nucleotidyltransferase (NT) domain responsible for UTase activity, a central HD domain that encodes UR activity, and two C-terminal ACT domains that seem to have a role in glutamine sensing.</text>
</comment>
<comment type="similarity">
    <text evidence="1">Belongs to the GlnD family.</text>
</comment>
<evidence type="ECO:0000255" key="1">
    <source>
        <dbReference type="HAMAP-Rule" id="MF_00277"/>
    </source>
</evidence>
<evidence type="ECO:0000255" key="2">
    <source>
        <dbReference type="PROSITE-ProRule" id="PRU01175"/>
    </source>
</evidence>
<reference key="1">
    <citation type="submission" date="2008-05" db="EMBL/GenBank/DDBJ databases">
        <title>Complete sequence of Shigella boydii serotype 18 strain BS512.</title>
        <authorList>
            <person name="Rasko D.A."/>
            <person name="Rosovitz M."/>
            <person name="Maurelli A.T."/>
            <person name="Myers G."/>
            <person name="Seshadri R."/>
            <person name="Cer R."/>
            <person name="Jiang L."/>
            <person name="Ravel J."/>
            <person name="Sebastian Y."/>
        </authorList>
    </citation>
    <scope>NUCLEOTIDE SEQUENCE [LARGE SCALE GENOMIC DNA]</scope>
    <source>
        <strain>CDC 3083-94 / BS512</strain>
    </source>
</reference>
<dbReference type="EC" id="2.7.7.59" evidence="1"/>
<dbReference type="EC" id="3.1.4.-" evidence="1"/>
<dbReference type="EMBL" id="CP001063">
    <property type="protein sequence ID" value="ACD08229.1"/>
    <property type="molecule type" value="Genomic_DNA"/>
</dbReference>
<dbReference type="RefSeq" id="WP_001094569.1">
    <property type="nucleotide sequence ID" value="NC_010658.1"/>
</dbReference>
<dbReference type="SMR" id="B2U309"/>
<dbReference type="STRING" id="344609.SbBS512_E0159"/>
<dbReference type="KEGG" id="sbc:SbBS512_E0159"/>
<dbReference type="HOGENOM" id="CLU_012833_0_0_6"/>
<dbReference type="Proteomes" id="UP000001030">
    <property type="component" value="Chromosome"/>
</dbReference>
<dbReference type="GO" id="GO:0008773">
    <property type="term" value="F:[protein-PII] uridylyltransferase activity"/>
    <property type="evidence" value="ECO:0007669"/>
    <property type="project" value="UniProtKB-UniRule"/>
</dbReference>
<dbReference type="GO" id="GO:0008081">
    <property type="term" value="F:phosphoric diester hydrolase activity"/>
    <property type="evidence" value="ECO:0007669"/>
    <property type="project" value="UniProtKB-UniRule"/>
</dbReference>
<dbReference type="GO" id="GO:0006808">
    <property type="term" value="P:regulation of nitrogen utilization"/>
    <property type="evidence" value="ECO:0007669"/>
    <property type="project" value="UniProtKB-UniRule"/>
</dbReference>
<dbReference type="CDD" id="cd04899">
    <property type="entry name" value="ACT_ACR-UUR-like_2"/>
    <property type="match status" value="1"/>
</dbReference>
<dbReference type="CDD" id="cd04900">
    <property type="entry name" value="ACT_UUR-like_1"/>
    <property type="match status" value="1"/>
</dbReference>
<dbReference type="CDD" id="cd00077">
    <property type="entry name" value="HDc"/>
    <property type="match status" value="1"/>
</dbReference>
<dbReference type="CDD" id="cd05401">
    <property type="entry name" value="NT_GlnE_GlnD_like"/>
    <property type="match status" value="1"/>
</dbReference>
<dbReference type="FunFam" id="1.10.3210.10:FF:000005">
    <property type="entry name" value="Bifunctional uridylyltransferase/uridylyl-removing enzyme"/>
    <property type="match status" value="1"/>
</dbReference>
<dbReference type="Gene3D" id="1.10.3210.10">
    <property type="entry name" value="Hypothetical protein af1432"/>
    <property type="match status" value="1"/>
</dbReference>
<dbReference type="HAMAP" id="MF_00277">
    <property type="entry name" value="PII_uridylyl_transf"/>
    <property type="match status" value="1"/>
</dbReference>
<dbReference type="InterPro" id="IPR045865">
    <property type="entry name" value="ACT-like_dom_sf"/>
</dbReference>
<dbReference type="InterPro" id="IPR002912">
    <property type="entry name" value="ACT_dom"/>
</dbReference>
<dbReference type="InterPro" id="IPR003607">
    <property type="entry name" value="HD/PDEase_dom"/>
</dbReference>
<dbReference type="InterPro" id="IPR006674">
    <property type="entry name" value="HD_domain"/>
</dbReference>
<dbReference type="InterPro" id="IPR043519">
    <property type="entry name" value="NT_sf"/>
</dbReference>
<dbReference type="InterPro" id="IPR013546">
    <property type="entry name" value="PII_UdlTrfase/GS_AdlTrfase"/>
</dbReference>
<dbReference type="InterPro" id="IPR002934">
    <property type="entry name" value="Polymerase_NTP_transf_dom"/>
</dbReference>
<dbReference type="InterPro" id="IPR010043">
    <property type="entry name" value="UTase/UR"/>
</dbReference>
<dbReference type="NCBIfam" id="NF002487">
    <property type="entry name" value="PRK01759.1"/>
    <property type="match status" value="1"/>
</dbReference>
<dbReference type="NCBIfam" id="NF003448">
    <property type="entry name" value="PRK05007.1"/>
    <property type="match status" value="1"/>
</dbReference>
<dbReference type="NCBIfam" id="TIGR01693">
    <property type="entry name" value="UTase_glnD"/>
    <property type="match status" value="1"/>
</dbReference>
<dbReference type="PANTHER" id="PTHR47320">
    <property type="entry name" value="BIFUNCTIONAL URIDYLYLTRANSFERASE/URIDYLYL-REMOVING ENZYME"/>
    <property type="match status" value="1"/>
</dbReference>
<dbReference type="PANTHER" id="PTHR47320:SF1">
    <property type="entry name" value="BIFUNCTIONAL URIDYLYLTRANSFERASE_URIDYLYL-REMOVING ENZYME"/>
    <property type="match status" value="1"/>
</dbReference>
<dbReference type="Pfam" id="PF01842">
    <property type="entry name" value="ACT"/>
    <property type="match status" value="2"/>
</dbReference>
<dbReference type="Pfam" id="PF08335">
    <property type="entry name" value="GlnD_UR_UTase"/>
    <property type="match status" value="1"/>
</dbReference>
<dbReference type="Pfam" id="PF01966">
    <property type="entry name" value="HD"/>
    <property type="match status" value="1"/>
</dbReference>
<dbReference type="Pfam" id="PF01909">
    <property type="entry name" value="NTP_transf_2"/>
    <property type="match status" value="1"/>
</dbReference>
<dbReference type="PIRSF" id="PIRSF006288">
    <property type="entry name" value="PII_uridyltransf"/>
    <property type="match status" value="1"/>
</dbReference>
<dbReference type="SMART" id="SM00471">
    <property type="entry name" value="HDc"/>
    <property type="match status" value="1"/>
</dbReference>
<dbReference type="SUPFAM" id="SSF55021">
    <property type="entry name" value="ACT-like"/>
    <property type="match status" value="2"/>
</dbReference>
<dbReference type="SUPFAM" id="SSF109604">
    <property type="entry name" value="HD-domain/PDEase-like"/>
    <property type="match status" value="1"/>
</dbReference>
<dbReference type="SUPFAM" id="SSF81301">
    <property type="entry name" value="Nucleotidyltransferase"/>
    <property type="match status" value="1"/>
</dbReference>
<dbReference type="SUPFAM" id="SSF81593">
    <property type="entry name" value="Nucleotidyltransferase substrate binding subunit/domain"/>
    <property type="match status" value="1"/>
</dbReference>
<dbReference type="PROSITE" id="PS51671">
    <property type="entry name" value="ACT"/>
    <property type="match status" value="2"/>
</dbReference>
<dbReference type="PROSITE" id="PS51831">
    <property type="entry name" value="HD"/>
    <property type="match status" value="1"/>
</dbReference>
<proteinExistence type="inferred from homology"/>
<gene>
    <name evidence="1" type="primary">glnD</name>
    <name type="ordered locus">SbBS512_E0159</name>
</gene>
<protein>
    <recommendedName>
        <fullName evidence="1">Bifunctional uridylyltransferase/uridylyl-removing enzyme</fullName>
        <shortName evidence="1">UTase/UR</shortName>
    </recommendedName>
    <alternativeName>
        <fullName evidence="1">Bifunctional [protein-PII] modification enzyme</fullName>
    </alternativeName>
    <alternativeName>
        <fullName evidence="1">Bifunctional nitrogen sensor protein</fullName>
    </alternativeName>
    <domain>
        <recommendedName>
            <fullName evidence="1">[Protein-PII] uridylyltransferase</fullName>
            <shortName evidence="1">PII uridylyltransferase</shortName>
            <shortName evidence="1">UTase</shortName>
            <ecNumber evidence="1">2.7.7.59</ecNumber>
        </recommendedName>
    </domain>
    <domain>
        <recommendedName>
            <fullName evidence="1">[Protein-PII]-UMP uridylyl-removing enzyme</fullName>
            <shortName evidence="1">UR</shortName>
            <ecNumber evidence="1">3.1.4.-</ecNumber>
        </recommendedName>
    </domain>
</protein>
<sequence>MNTLPEQYANTALPTLPGQPQNPCVWPRDELTVGGIKAHIDTFQRWLGDAFDNGISAEQLIEARTEFIDQLLQRLWIEAGFSQIADLALVAVGGYGRGELHPLSDIDLLILSRKKLPDDQAQKVGELLTLLWDVKLEVGHSVRTLEECMLEGLSDLTVATNLIESRLLIGDVALFLELQKHIFSEGFWPSDKFYAAKVEEQNQRHQRYHGTSYNLEPDIKSSPGGLRDIHTLQWVARRHFGATSLDEMVGFGFLTSAERAELNECLHILWRIRFALHLVVSRYDNRLLFDRQLSVAQRLNYSGEGNEPVERMMKDYFRVTRRVSELNQMLLQLFDEAILALPADEKPRPIDDEFQLRGTLIDLRDETLFMRQPEAILRMFYTMVRNSAITGIYSTTLRQLRHARRHLQQPLCNIPEARKLFLSILRHPGAVRRGLLPMHRHSVLGAYMPQWSHIVGQMQFDLFHAYTVDEHTIRVMLKLESFASEETRQRHPLCVDVWPRLPSTELIFIAALFHDIAKGRGGDHSILGAQDVVHFAELHGLNSRETQLVAWLVRQHLLMSVTAQRRDIQDPEVIKQFAEEVQTENRLRYLVCLTVADICATNETLWNSWKQSLLRELYFATEKQLRRGMQNTPDMRERVRHHQLQALALLRMDNIDEEALHQIWSRCRANYFVRHSPNQLAWHARHLLQHDLSKPLVLLSPQATRGGTEIFIWSPDRPYLFAAVCAELDRRNLSVHDAQIFTTRDGMAMDTFIVLEPDGNPLSADRHEVIRFGLEQVLTQSSWQPPQPRRQPAKLRHFTVETEVTFLPTHTDRKSFLELIALDQPGLLARVGKIFADLGISLHGARITTIGERVEDLFIIATADRRALNNELQQEVHQRLTEALNPNDKG</sequence>
<keyword id="KW-0378">Hydrolase</keyword>
<keyword id="KW-0460">Magnesium</keyword>
<keyword id="KW-0511">Multifunctional enzyme</keyword>
<keyword id="KW-0548">Nucleotidyltransferase</keyword>
<keyword id="KW-1185">Reference proteome</keyword>
<keyword id="KW-0677">Repeat</keyword>
<keyword id="KW-0808">Transferase</keyword>
<name>GLND_SHIB3</name>
<organism>
    <name type="scientific">Shigella boydii serotype 18 (strain CDC 3083-94 / BS512)</name>
    <dbReference type="NCBI Taxonomy" id="344609"/>
    <lineage>
        <taxon>Bacteria</taxon>
        <taxon>Pseudomonadati</taxon>
        <taxon>Pseudomonadota</taxon>
        <taxon>Gammaproteobacteria</taxon>
        <taxon>Enterobacterales</taxon>
        <taxon>Enterobacteriaceae</taxon>
        <taxon>Shigella</taxon>
    </lineage>
</organism>